<accession>P69832</accession>
<accession>P37189</accession>
<accession>P76411</accession>
<keyword id="KW-0997">Cell inner membrane</keyword>
<keyword id="KW-1003">Cell membrane</keyword>
<keyword id="KW-0298">Galactitol metabolism</keyword>
<keyword id="KW-0472">Membrane</keyword>
<keyword id="KW-0598">Phosphotransferase system</keyword>
<keyword id="KW-1185">Reference proteome</keyword>
<keyword id="KW-0762">Sugar transport</keyword>
<keyword id="KW-0812">Transmembrane</keyword>
<keyword id="KW-1133">Transmembrane helix</keyword>
<keyword id="KW-0813">Transport</keyword>
<reference key="1">
    <citation type="journal article" date="2001" name="Nature">
        <title>Genome sequence of enterohaemorrhagic Escherichia coli O157:H7.</title>
        <authorList>
            <person name="Perna N.T."/>
            <person name="Plunkett G. III"/>
            <person name="Burland V."/>
            <person name="Mau B."/>
            <person name="Glasner J.D."/>
            <person name="Rose D.J."/>
            <person name="Mayhew G.F."/>
            <person name="Evans P.S."/>
            <person name="Gregor J."/>
            <person name="Kirkpatrick H.A."/>
            <person name="Posfai G."/>
            <person name="Hackett J."/>
            <person name="Klink S."/>
            <person name="Boutin A."/>
            <person name="Shao Y."/>
            <person name="Miller L."/>
            <person name="Grotbeck E.J."/>
            <person name="Davis N.W."/>
            <person name="Lim A."/>
            <person name="Dimalanta E.T."/>
            <person name="Potamousis K."/>
            <person name="Apodaca J."/>
            <person name="Anantharaman T.S."/>
            <person name="Lin J."/>
            <person name="Yen G."/>
            <person name="Schwartz D.C."/>
            <person name="Welch R.A."/>
            <person name="Blattner F.R."/>
        </authorList>
    </citation>
    <scope>NUCLEOTIDE SEQUENCE [LARGE SCALE GENOMIC DNA]</scope>
    <source>
        <strain>O157:H7 / EDL933 / ATCC 700927 / EHEC</strain>
    </source>
</reference>
<reference key="2">
    <citation type="journal article" date="2001" name="DNA Res.">
        <title>Complete genome sequence of enterohemorrhagic Escherichia coli O157:H7 and genomic comparison with a laboratory strain K-12.</title>
        <authorList>
            <person name="Hayashi T."/>
            <person name="Makino K."/>
            <person name="Ohnishi M."/>
            <person name="Kurokawa K."/>
            <person name="Ishii K."/>
            <person name="Yokoyama K."/>
            <person name="Han C.-G."/>
            <person name="Ohtsubo E."/>
            <person name="Nakayama K."/>
            <person name="Murata T."/>
            <person name="Tanaka M."/>
            <person name="Tobe T."/>
            <person name="Iida T."/>
            <person name="Takami H."/>
            <person name="Honda T."/>
            <person name="Sasakawa C."/>
            <person name="Ogasawara N."/>
            <person name="Yasunaga T."/>
            <person name="Kuhara S."/>
            <person name="Shiba T."/>
            <person name="Hattori M."/>
            <person name="Shinagawa H."/>
        </authorList>
    </citation>
    <scope>NUCLEOTIDE SEQUENCE [LARGE SCALE GENOMIC DNA]</scope>
    <source>
        <strain>O157:H7 / Sakai / RIMD 0509952 / EHEC</strain>
    </source>
</reference>
<protein>
    <recommendedName>
        <fullName evidence="1">PTS system galactitol-specific EIIC component</fullName>
    </recommendedName>
    <alternativeName>
        <fullName evidence="1">EIIC-Gat</fullName>
    </alternativeName>
    <alternativeName>
        <fullName evidence="1">Galactitol permease IIC component</fullName>
    </alternativeName>
</protein>
<organism>
    <name type="scientific">Escherichia coli O157:H7</name>
    <dbReference type="NCBI Taxonomy" id="83334"/>
    <lineage>
        <taxon>Bacteria</taxon>
        <taxon>Pseudomonadati</taxon>
        <taxon>Pseudomonadota</taxon>
        <taxon>Gammaproteobacteria</taxon>
        <taxon>Enterobacterales</taxon>
        <taxon>Enterobacteriaceae</taxon>
        <taxon>Escherichia</taxon>
    </lineage>
</organism>
<gene>
    <name type="primary">gatC</name>
    <name type="ordered locus">Z3255</name>
    <name type="ordered locus">ECs2895</name>
</gene>
<comment type="function">
    <text evidence="1">The phosphoenolpyruvate-dependent sugar phosphotransferase system (PTS), a major carbohydrate active transport system, catalyzes the phosphorylation of incoming sugar substrates concomitant with their translocation across the cell membrane. The enzyme II complex composed of GatA, GatB and GatC is involved in galactitol transport.</text>
</comment>
<comment type="subunit">
    <text evidence="1">Forms a complex with one each of subunit of GatA, GatB and 2 subunits of GatC.</text>
</comment>
<comment type="subcellular location">
    <subcellularLocation>
        <location evidence="2">Cell inner membrane</location>
        <topology evidence="2">Multi-pass membrane protein</topology>
    </subcellularLocation>
</comment>
<comment type="induction">
    <text evidence="1">Constitutively expressed.</text>
</comment>
<comment type="domain">
    <text evidence="2">The EIIC domain forms the PTS system translocation channel and contains the specific substrate-binding site.</text>
</comment>
<sequence length="451" mass="48365">MFSEVMRYILDLGPTVMLPIVIIIFSKILGMKAGDCFKAGLHIGIGFVGIGLVIGLMLDSIGPAAKAMAENFDLNLHVVDVGWPGSSPMTWASQIALVAIPIAILVNVAMLLTRMTRVVNVDIWNIWHMTFTGALLHLATGSWMIGMAGVVIHAAFVYKLGDWFARDTRNFFELEGIAIPHGTSAYMGPIAVLVDAIIEKIPGVNRIKFSADDIQRKFGPFGEPVTVGFVMGLIIGILAGYDVKGVLQLAVKTAAVMLLMPRVIKPIMDGLTPIAKQARSRLQAKFGGQEFLIGLDPALLLGHTAVVSASLIFIPLTILIAVCVPGNQVLPFGDLATIGFFVAMAVAVHRGNLFRTLISGVIIMSITLWIATQTIGLHTQLAANAGALKAGGMVASMDQGGSPITWLLIQVFSPQNIPGFIIIGAIYLTGIFMTWRRARGFIKQEKVVLAE</sequence>
<evidence type="ECO:0000250" key="1">
    <source>
        <dbReference type="UniProtKB" id="P69831"/>
    </source>
</evidence>
<evidence type="ECO:0000255" key="2">
    <source>
        <dbReference type="PROSITE-ProRule" id="PRU00427"/>
    </source>
</evidence>
<proteinExistence type="inferred from homology"/>
<name>PTKC_ECO57</name>
<dbReference type="EMBL" id="AE005174">
    <property type="protein sequence ID" value="AAG57149.1"/>
    <property type="molecule type" value="Genomic_DNA"/>
</dbReference>
<dbReference type="EMBL" id="BA000007">
    <property type="protein sequence ID" value="BAB36318.1"/>
    <property type="molecule type" value="Genomic_DNA"/>
</dbReference>
<dbReference type="PIR" id="A85836">
    <property type="entry name" value="A85836"/>
</dbReference>
<dbReference type="PIR" id="G90990">
    <property type="entry name" value="G90990"/>
</dbReference>
<dbReference type="RefSeq" id="WP_000490679.1">
    <property type="nucleotide sequence ID" value="NZ_VOAI01000013.1"/>
</dbReference>
<dbReference type="STRING" id="155864.Z3255"/>
<dbReference type="KEGG" id="ece:Z3255"/>
<dbReference type="KEGG" id="ecs:ECs_2895"/>
<dbReference type="PATRIC" id="fig|386585.9.peg.3027"/>
<dbReference type="eggNOG" id="COG3775">
    <property type="taxonomic scope" value="Bacteria"/>
</dbReference>
<dbReference type="HOGENOM" id="CLU_040393_0_0_6"/>
<dbReference type="OMA" id="VFDMGWP"/>
<dbReference type="Proteomes" id="UP000000558">
    <property type="component" value="Chromosome"/>
</dbReference>
<dbReference type="Proteomes" id="UP000002519">
    <property type="component" value="Chromosome"/>
</dbReference>
<dbReference type="GO" id="GO:0005886">
    <property type="term" value="C:plasma membrane"/>
    <property type="evidence" value="ECO:0007669"/>
    <property type="project" value="UniProtKB-SubCell"/>
</dbReference>
<dbReference type="GO" id="GO:0015577">
    <property type="term" value="F:galactitol transmembrane transporter activity"/>
    <property type="evidence" value="ECO:0007669"/>
    <property type="project" value="InterPro"/>
</dbReference>
<dbReference type="GO" id="GO:0019402">
    <property type="term" value="P:galactitol metabolic process"/>
    <property type="evidence" value="ECO:0007669"/>
    <property type="project" value="UniProtKB-KW"/>
</dbReference>
<dbReference type="GO" id="GO:0009401">
    <property type="term" value="P:phosphoenolpyruvate-dependent sugar phosphotransferase system"/>
    <property type="evidence" value="ECO:0007669"/>
    <property type="project" value="UniProtKB-KW"/>
</dbReference>
<dbReference type="InterPro" id="IPR013853">
    <property type="entry name" value="EIIC-GAT"/>
</dbReference>
<dbReference type="InterPro" id="IPR013014">
    <property type="entry name" value="PTS_EIIC_2"/>
</dbReference>
<dbReference type="InterPro" id="IPR004703">
    <property type="entry name" value="PTS_sugar-sp_permease"/>
</dbReference>
<dbReference type="NCBIfam" id="TIGR00827">
    <property type="entry name" value="EIIC-GAT"/>
    <property type="match status" value="1"/>
</dbReference>
<dbReference type="PANTHER" id="PTHR37324">
    <property type="entry name" value="PTS SYSTEM GALACTITOL-SPECIFIC EIIC COMPONENT"/>
    <property type="match status" value="1"/>
</dbReference>
<dbReference type="PANTHER" id="PTHR37324:SF2">
    <property type="entry name" value="PTS SYSTEM GALACTITOL-SPECIFIC EIIC COMPONENT"/>
    <property type="match status" value="1"/>
</dbReference>
<dbReference type="Pfam" id="PF03611">
    <property type="entry name" value="EIIC-GAT"/>
    <property type="match status" value="1"/>
</dbReference>
<dbReference type="PIRSF" id="PIRSF006304">
    <property type="entry name" value="GatC"/>
    <property type="match status" value="1"/>
</dbReference>
<dbReference type="PROSITE" id="PS51104">
    <property type="entry name" value="PTS_EIIC_TYPE_2"/>
    <property type="match status" value="1"/>
</dbReference>
<feature type="chain" id="PRO_0000186571" description="PTS system galactitol-specific EIIC component">
    <location>
        <begin position="1"/>
        <end position="451"/>
    </location>
</feature>
<feature type="transmembrane region" description="Helical" evidence="2">
    <location>
        <begin position="9"/>
        <end position="29"/>
    </location>
</feature>
<feature type="transmembrane region" description="Helical" evidence="2">
    <location>
        <begin position="41"/>
        <end position="61"/>
    </location>
</feature>
<feature type="transmembrane region" description="Helical" evidence="2">
    <location>
        <begin position="92"/>
        <end position="112"/>
    </location>
</feature>
<feature type="transmembrane region" description="Helical" evidence="2">
    <location>
        <begin position="138"/>
        <end position="158"/>
    </location>
</feature>
<feature type="transmembrane region" description="Helical" evidence="2">
    <location>
        <begin position="218"/>
        <end position="238"/>
    </location>
</feature>
<feature type="transmembrane region" description="Helical" evidence="2">
    <location>
        <begin position="305"/>
        <end position="325"/>
    </location>
</feature>
<feature type="transmembrane region" description="Helical" evidence="2">
    <location>
        <begin position="329"/>
        <end position="349"/>
    </location>
</feature>
<feature type="transmembrane region" description="Helical" evidence="2">
    <location>
        <begin position="357"/>
        <end position="377"/>
    </location>
</feature>
<feature type="transmembrane region" description="Helical" evidence="2">
    <location>
        <begin position="392"/>
        <end position="412"/>
    </location>
</feature>
<feature type="transmembrane region" description="Helical" evidence="2">
    <location>
        <begin position="415"/>
        <end position="435"/>
    </location>
</feature>
<feature type="domain" description="PTS EIIC type-2" evidence="2">
    <location>
        <begin position="6"/>
        <end position="435"/>
    </location>
</feature>